<evidence type="ECO:0000250" key="1"/>
<evidence type="ECO:0000250" key="2">
    <source>
        <dbReference type="UniProtKB" id="P03348"/>
    </source>
</evidence>
<evidence type="ECO:0000250" key="3">
    <source>
        <dbReference type="UniProtKB" id="P03366"/>
    </source>
</evidence>
<evidence type="ECO:0000250" key="4">
    <source>
        <dbReference type="UniProtKB" id="P03367"/>
    </source>
</evidence>
<evidence type="ECO:0000250" key="5">
    <source>
        <dbReference type="UniProtKB" id="P04585"/>
    </source>
</evidence>
<evidence type="ECO:0000250" key="6">
    <source>
        <dbReference type="UniProtKB" id="P04591"/>
    </source>
</evidence>
<evidence type="ECO:0000250" key="7">
    <source>
        <dbReference type="UniProtKB" id="P12493"/>
    </source>
</evidence>
<evidence type="ECO:0000250" key="8">
    <source>
        <dbReference type="UniProtKB" id="P12497"/>
    </source>
</evidence>
<evidence type="ECO:0000255" key="9"/>
<evidence type="ECO:0000255" key="10">
    <source>
        <dbReference type="PROSITE-ProRule" id="PRU00047"/>
    </source>
</evidence>
<evidence type="ECO:0000255" key="11">
    <source>
        <dbReference type="PROSITE-ProRule" id="PRU00275"/>
    </source>
</evidence>
<evidence type="ECO:0000255" key="12">
    <source>
        <dbReference type="PROSITE-ProRule" id="PRU00405"/>
    </source>
</evidence>
<evidence type="ECO:0000255" key="13">
    <source>
        <dbReference type="PROSITE-ProRule" id="PRU00408"/>
    </source>
</evidence>
<evidence type="ECO:0000255" key="14">
    <source>
        <dbReference type="PROSITE-ProRule" id="PRU00450"/>
    </source>
</evidence>
<evidence type="ECO:0000255" key="15">
    <source>
        <dbReference type="PROSITE-ProRule" id="PRU00457"/>
    </source>
</evidence>
<evidence type="ECO:0000255" key="16">
    <source>
        <dbReference type="PROSITE-ProRule" id="PRU00506"/>
    </source>
</evidence>
<evidence type="ECO:0000255" key="17">
    <source>
        <dbReference type="PROSITE-ProRule" id="PRU10094"/>
    </source>
</evidence>
<evidence type="ECO:0000256" key="18">
    <source>
        <dbReference type="SAM" id="MobiDB-lite"/>
    </source>
</evidence>
<evidence type="ECO:0000305" key="19"/>
<evidence type="ECO:0007829" key="20">
    <source>
        <dbReference type="PDB" id="1NC8"/>
    </source>
</evidence>
<evidence type="ECO:0007829" key="21">
    <source>
        <dbReference type="PDB" id="2E1X"/>
    </source>
</evidence>
<evidence type="ECO:0007829" key="22">
    <source>
        <dbReference type="PDB" id="2IWJ"/>
    </source>
</evidence>
<name>POL_HV2G1</name>
<organismHost>
    <name type="scientific">Homo sapiens</name>
    <name type="common">Human</name>
    <dbReference type="NCBI Taxonomy" id="9606"/>
</organismHost>
<organism>
    <name type="scientific">Human immunodeficiency virus type 2 subtype A (isolate Ghana-1)</name>
    <name type="common">HIV-2</name>
    <dbReference type="NCBI Taxonomy" id="11717"/>
    <lineage>
        <taxon>Viruses</taxon>
        <taxon>Riboviria</taxon>
        <taxon>Pararnavirae</taxon>
        <taxon>Artverviricota</taxon>
        <taxon>Revtraviricetes</taxon>
        <taxon>Ortervirales</taxon>
        <taxon>Retroviridae</taxon>
        <taxon>Orthoretrovirinae</taxon>
        <taxon>Lentivirus</taxon>
        <taxon>Human immunodeficiency virus 2</taxon>
    </lineage>
</organism>
<sequence length="1464" mass="164882">MGARNSVLRGKKADELEKIRLRPSGKKKYRLKHIVWAANELDKFGLAESLLESKEGCQKILTVLDPLVPTGSENLKSLFNTVCVIWCLHAEEKVKDTEEAKKLVQRHLGAETGTAEKMPSTSRPTAPPSGRGRNFPVQQTGGGNYIHVPLSPRTLNAWVKLVEDKKFGAEVVPGFQALSEGCTPYDINQMLNCVGDHQAAMQIIREIINDEAADWDAQHPIPGPLPAGQLRDPRGSDIAGTTSTVEEQIQWMYRPQNPVPVGNIYRRWIQIGLQKCVRMYNPTNILDVKQGPKEPFQSYVDRFYKSLRAEQTDPAVKNWMTQTLLIQNANPDCKLVLKGLGMNPTLEEMLTACQGVGGPGQKARLMAEALKEALTPPPIPFAAAQQRKVIRCWNCGKEGHSARQCRAPRRQGCWKCGKTGHVMAKCPERQAGFLRDGSMGKEAPQLPRGPSSSGADTNSTPSRSSSGSIGKIYAAGERAEGAEGETIQRGDGRLTAPRAGKSTSQRGDRGLAAPQFSLWKRPVVTAYIEVQPVEVLLDTGADDSIVAGIQLGDNYVPKIVGGIGGFINTKEIKNIEIKVLNKRVRATIMTGDTPINIFGRNILTALGMSLNLPIAKIEPIKVTLKPGKDGPRLRQWPLTKEKIEALREICEKMEKEGQLEEAPPTNPYNTPTFAIKKKDKNKWRMLIDFRELNRVTQDFTEIQLGIPHPAGLAKKKRITVLDVGDAYFSIPLHEDFRQYTAFTLPSVNNAEPGKRYIYKVLPQGWKGSPAIFQHTMRQVLEPFRKANPDVILIQYMDDILIASDRTGLEHDKVVLQLKELLNGLGFSTPDEKFQKDPPLQWMGYELWPTKWKLQKLQLPQKEIWTVNDIQKLVGVLNWAAQIYPGIKTKHLCRLIKGKMTLTEEVQWTELAEAELEENKIILSQEQEGYYYQEEKELEATIQKNQDNQWTYKIHQEEKILKVGKYAKIKNTHTNGVRLLAQVVQKIGKEALVIWGRIPKFHLPVERETWEQWWDNYWQVTWIPEWDFVSTPPLVRLTFNLVGDPIPGAETFYTDGSCNRQSKEGKARYVTDRGRDKVRVLERTTNQQAELEAFAMTLTDSGPKVNIIVDSQYVMGIVVGQPTESESRIVNQIIEDMIKKEAVYVAWVPAHKGIGGNQEVDHLVSQGIRQVLFLERIEPAQEEHEKYHSNMKELTHKFGIPQLVARQIVNTCAQCQQKGEAIHGQVNAEIGVWQMDCTHLEGKIIIVAVHVASGFIEAEVIPQESGRQTALFLLKLASRWPITHLHTDNGSNFTSQEVKMVAWWIGIEQSFGVPYNPQSQGVVEAMNHHLKNQISRIREQANTIETIVLMAVHCMNFKRRGGIGDMTPAERLINMITTEQEIQFLQRKNSNFKNFQVYYREGRDQLWKGPGELLWKGDGAVIVKVGADIKVIPRRKAKIIRDYGGRQELDSSHLEGAREEDGEVA</sequence>
<dbReference type="EC" id="3.4.23.47"/>
<dbReference type="EC" id="2.7.7.49"/>
<dbReference type="EC" id="2.7.7.7"/>
<dbReference type="EC" id="3.1.26.13"/>
<dbReference type="EC" id="3.1.13.2"/>
<dbReference type="EC" id="2.7.7.-" evidence="5"/>
<dbReference type="EC" id="3.1.-.-" evidence="5"/>
<dbReference type="EMBL" id="M30895">
    <property type="protein sequence ID" value="AAA43933.1"/>
    <property type="status" value="ALT_SEQ"/>
    <property type="molecule type" value="Genomic_DNA"/>
</dbReference>
<dbReference type="PIR" id="JS0328">
    <property type="entry name" value="GNLJGG"/>
</dbReference>
<dbReference type="PDB" id="1NC8">
    <property type="method" value="NMR"/>
    <property type="chains" value="A=384-412"/>
</dbReference>
<dbReference type="PDB" id="2E1X">
    <property type="method" value="NMR"/>
    <property type="chains" value="A=406-432"/>
</dbReference>
<dbReference type="PDB" id="2IWJ">
    <property type="method" value="NMR"/>
    <property type="chains" value="A=406-432"/>
</dbReference>
<dbReference type="PDB" id="9CLJ">
    <property type="method" value="EM"/>
    <property type="resolution" value="1.98 A"/>
    <property type="chains" value="A=136-366"/>
</dbReference>
<dbReference type="PDB" id="9CNS">
    <property type="method" value="EM"/>
    <property type="resolution" value="3.25 A"/>
    <property type="chains" value="A/B/C=136-366"/>
</dbReference>
<dbReference type="PDB" id="9CNT">
    <property type="method" value="EM"/>
    <property type="resolution" value="2.97 A"/>
    <property type="chains" value="A/B/C/D=136-366"/>
</dbReference>
<dbReference type="PDB" id="9CNU">
    <property type="method" value="EM"/>
    <property type="resolution" value="2.99 A"/>
    <property type="chains" value="A=136-366"/>
</dbReference>
<dbReference type="PDB" id="9CNV">
    <property type="method" value="EM"/>
    <property type="resolution" value="3.16 A"/>
    <property type="chains" value="A=136-366"/>
</dbReference>
<dbReference type="PDBsum" id="1NC8"/>
<dbReference type="PDBsum" id="2E1X"/>
<dbReference type="PDBsum" id="2IWJ"/>
<dbReference type="PDBsum" id="9CLJ"/>
<dbReference type="PDBsum" id="9CNS"/>
<dbReference type="PDBsum" id="9CNT"/>
<dbReference type="PDBsum" id="9CNU"/>
<dbReference type="PDBsum" id="9CNV"/>
<dbReference type="BMRB" id="P18042"/>
<dbReference type="EMDB" id="EMD-45676"/>
<dbReference type="EMDB" id="EMD-45758"/>
<dbReference type="EMDB" id="EMD-45759"/>
<dbReference type="EMDB" id="EMD-45760"/>
<dbReference type="EMDB" id="EMD-45761"/>
<dbReference type="SMR" id="P18042"/>
<dbReference type="MEROPS" id="A02.002"/>
<dbReference type="EvolutionaryTrace" id="P18042"/>
<dbReference type="PRO" id="PR:P18042"/>
<dbReference type="Proteomes" id="UP000007424">
    <property type="component" value="Segment"/>
</dbReference>
<dbReference type="GO" id="GO:0043657">
    <property type="term" value="C:host cell"/>
    <property type="evidence" value="ECO:0007669"/>
    <property type="project" value="GOC"/>
</dbReference>
<dbReference type="GO" id="GO:0042025">
    <property type="term" value="C:host cell nucleus"/>
    <property type="evidence" value="ECO:0007669"/>
    <property type="project" value="UniProtKB-SubCell"/>
</dbReference>
<dbReference type="GO" id="GO:0020002">
    <property type="term" value="C:host cell plasma membrane"/>
    <property type="evidence" value="ECO:0007669"/>
    <property type="project" value="UniProtKB-SubCell"/>
</dbReference>
<dbReference type="GO" id="GO:0072494">
    <property type="term" value="C:host multivesicular body"/>
    <property type="evidence" value="ECO:0007669"/>
    <property type="project" value="UniProtKB-SubCell"/>
</dbReference>
<dbReference type="GO" id="GO:0016020">
    <property type="term" value="C:membrane"/>
    <property type="evidence" value="ECO:0007669"/>
    <property type="project" value="UniProtKB-KW"/>
</dbReference>
<dbReference type="GO" id="GO:0019013">
    <property type="term" value="C:viral nucleocapsid"/>
    <property type="evidence" value="ECO:0007669"/>
    <property type="project" value="UniProtKB-KW"/>
</dbReference>
<dbReference type="GO" id="GO:0055036">
    <property type="term" value="C:virion membrane"/>
    <property type="evidence" value="ECO:0007669"/>
    <property type="project" value="UniProtKB-SubCell"/>
</dbReference>
<dbReference type="GO" id="GO:0004190">
    <property type="term" value="F:aspartic-type endopeptidase activity"/>
    <property type="evidence" value="ECO:0007669"/>
    <property type="project" value="UniProtKB-KW"/>
</dbReference>
<dbReference type="GO" id="GO:0003677">
    <property type="term" value="F:DNA binding"/>
    <property type="evidence" value="ECO:0007669"/>
    <property type="project" value="UniProtKB-KW"/>
</dbReference>
<dbReference type="GO" id="GO:0003887">
    <property type="term" value="F:DNA-directed DNA polymerase activity"/>
    <property type="evidence" value="ECO:0007669"/>
    <property type="project" value="UniProtKB-KW"/>
</dbReference>
<dbReference type="GO" id="GO:0004533">
    <property type="term" value="F:exoribonuclease H activity"/>
    <property type="evidence" value="ECO:0007669"/>
    <property type="project" value="UniProtKB-EC"/>
</dbReference>
<dbReference type="GO" id="GO:0008289">
    <property type="term" value="F:lipid binding"/>
    <property type="evidence" value="ECO:0007669"/>
    <property type="project" value="UniProtKB-KW"/>
</dbReference>
<dbReference type="GO" id="GO:0035613">
    <property type="term" value="F:RNA stem-loop binding"/>
    <property type="evidence" value="ECO:0007669"/>
    <property type="project" value="TreeGrafter"/>
</dbReference>
<dbReference type="GO" id="GO:0003964">
    <property type="term" value="F:RNA-directed DNA polymerase activity"/>
    <property type="evidence" value="ECO:0007669"/>
    <property type="project" value="UniProtKB-KW"/>
</dbReference>
<dbReference type="GO" id="GO:0004523">
    <property type="term" value="F:RNA-DNA hybrid ribonuclease activity"/>
    <property type="evidence" value="ECO:0007669"/>
    <property type="project" value="InterPro"/>
</dbReference>
<dbReference type="GO" id="GO:0005198">
    <property type="term" value="F:structural molecule activity"/>
    <property type="evidence" value="ECO:0007669"/>
    <property type="project" value="InterPro"/>
</dbReference>
<dbReference type="GO" id="GO:0008270">
    <property type="term" value="F:zinc ion binding"/>
    <property type="evidence" value="ECO:0007669"/>
    <property type="project" value="UniProtKB-KW"/>
</dbReference>
<dbReference type="GO" id="GO:0015074">
    <property type="term" value="P:DNA integration"/>
    <property type="evidence" value="ECO:0007669"/>
    <property type="project" value="UniProtKB-KW"/>
</dbReference>
<dbReference type="GO" id="GO:0006310">
    <property type="term" value="P:DNA recombination"/>
    <property type="evidence" value="ECO:0007669"/>
    <property type="project" value="UniProtKB-KW"/>
</dbReference>
<dbReference type="GO" id="GO:0075713">
    <property type="term" value="P:establishment of integrated proviral latency"/>
    <property type="evidence" value="ECO:0007669"/>
    <property type="project" value="UniProtKB-KW"/>
</dbReference>
<dbReference type="GO" id="GO:0006508">
    <property type="term" value="P:proteolysis"/>
    <property type="evidence" value="ECO:0007669"/>
    <property type="project" value="UniProtKB-KW"/>
</dbReference>
<dbReference type="GO" id="GO:0046718">
    <property type="term" value="P:symbiont entry into host cell"/>
    <property type="evidence" value="ECO:0007669"/>
    <property type="project" value="UniProtKB-KW"/>
</dbReference>
<dbReference type="GO" id="GO:0039657">
    <property type="term" value="P:symbiont-mediated suppression of host gene expression"/>
    <property type="evidence" value="ECO:0007669"/>
    <property type="project" value="UniProtKB-KW"/>
</dbReference>
<dbReference type="GO" id="GO:0044826">
    <property type="term" value="P:viral genome integration into host DNA"/>
    <property type="evidence" value="ECO:0007669"/>
    <property type="project" value="UniProtKB-KW"/>
</dbReference>
<dbReference type="GO" id="GO:0075732">
    <property type="term" value="P:viral penetration into host nucleus"/>
    <property type="evidence" value="ECO:0007669"/>
    <property type="project" value="UniProtKB-KW"/>
</dbReference>
<dbReference type="GO" id="GO:0075523">
    <property type="term" value="P:viral translational frameshifting"/>
    <property type="evidence" value="ECO:0007669"/>
    <property type="project" value="UniProtKB-KW"/>
</dbReference>
<dbReference type="CDD" id="cd05482">
    <property type="entry name" value="HIV_retropepsin_like"/>
    <property type="match status" value="1"/>
</dbReference>
<dbReference type="FunFam" id="3.30.70.270:FF:000006">
    <property type="entry name" value="Gag-Pol polyprotein"/>
    <property type="match status" value="1"/>
</dbReference>
<dbReference type="Gene3D" id="1.10.10.200">
    <property type="match status" value="1"/>
</dbReference>
<dbReference type="Gene3D" id="1.10.1200.30">
    <property type="match status" value="1"/>
</dbReference>
<dbReference type="Gene3D" id="3.30.70.270">
    <property type="match status" value="3"/>
</dbReference>
<dbReference type="Gene3D" id="2.40.70.10">
    <property type="entry name" value="Acid Proteases"/>
    <property type="match status" value="1"/>
</dbReference>
<dbReference type="Gene3D" id="3.10.10.10">
    <property type="entry name" value="HIV Type 1 Reverse Transcriptase, subunit A, domain 1"/>
    <property type="match status" value="1"/>
</dbReference>
<dbReference type="Gene3D" id="1.10.375.10">
    <property type="entry name" value="Human Immunodeficiency Virus Type 1 Capsid Protein"/>
    <property type="match status" value="1"/>
</dbReference>
<dbReference type="Gene3D" id="1.10.150.90">
    <property type="entry name" value="Immunodeficiency lentiviruses, gag gene matrix protein p17"/>
    <property type="match status" value="1"/>
</dbReference>
<dbReference type="Gene3D" id="2.30.30.10">
    <property type="entry name" value="Integrase, C-terminal domain superfamily, retroviral"/>
    <property type="match status" value="1"/>
</dbReference>
<dbReference type="Gene3D" id="3.30.420.10">
    <property type="entry name" value="Ribonuclease H-like superfamily/Ribonuclease H"/>
    <property type="match status" value="2"/>
</dbReference>
<dbReference type="Gene3D" id="1.20.5.760">
    <property type="entry name" value="Single helix bin"/>
    <property type="match status" value="1"/>
</dbReference>
<dbReference type="Gene3D" id="4.10.60.10">
    <property type="entry name" value="Zinc finger, CCHC-type"/>
    <property type="match status" value="1"/>
</dbReference>
<dbReference type="InterPro" id="IPR001969">
    <property type="entry name" value="Aspartic_peptidase_AS"/>
</dbReference>
<dbReference type="InterPro" id="IPR043502">
    <property type="entry name" value="DNA/RNA_pol_sf"/>
</dbReference>
<dbReference type="InterPro" id="IPR045345">
    <property type="entry name" value="Gag_p24_C"/>
</dbReference>
<dbReference type="InterPro" id="IPR017856">
    <property type="entry name" value="Integrase-like_N"/>
</dbReference>
<dbReference type="InterPro" id="IPR036862">
    <property type="entry name" value="Integrase_C_dom_sf_retrovir"/>
</dbReference>
<dbReference type="InterPro" id="IPR001037">
    <property type="entry name" value="Integrase_C_retrovir"/>
</dbReference>
<dbReference type="InterPro" id="IPR001584">
    <property type="entry name" value="Integrase_cat-core"/>
</dbReference>
<dbReference type="InterPro" id="IPR003308">
    <property type="entry name" value="Integrase_Zn-bd_dom_N"/>
</dbReference>
<dbReference type="InterPro" id="IPR000071">
    <property type="entry name" value="Lentvrl_matrix_N"/>
</dbReference>
<dbReference type="InterPro" id="IPR012344">
    <property type="entry name" value="Matrix_HIV/RSV_N"/>
</dbReference>
<dbReference type="InterPro" id="IPR001995">
    <property type="entry name" value="Peptidase_A2_cat"/>
</dbReference>
<dbReference type="InterPro" id="IPR021109">
    <property type="entry name" value="Peptidase_aspartic_dom_sf"/>
</dbReference>
<dbReference type="InterPro" id="IPR034170">
    <property type="entry name" value="Retropepsin-like_cat_dom"/>
</dbReference>
<dbReference type="InterPro" id="IPR018061">
    <property type="entry name" value="Retropepsins"/>
</dbReference>
<dbReference type="InterPro" id="IPR008916">
    <property type="entry name" value="Retrov_capsid_C"/>
</dbReference>
<dbReference type="InterPro" id="IPR008919">
    <property type="entry name" value="Retrov_capsid_N"/>
</dbReference>
<dbReference type="InterPro" id="IPR010999">
    <property type="entry name" value="Retrovr_matrix"/>
</dbReference>
<dbReference type="InterPro" id="IPR043128">
    <property type="entry name" value="Rev_trsase/Diguanyl_cyclase"/>
</dbReference>
<dbReference type="InterPro" id="IPR012337">
    <property type="entry name" value="RNaseH-like_sf"/>
</dbReference>
<dbReference type="InterPro" id="IPR002156">
    <property type="entry name" value="RNaseH_domain"/>
</dbReference>
<dbReference type="InterPro" id="IPR036397">
    <property type="entry name" value="RNaseH_sf"/>
</dbReference>
<dbReference type="InterPro" id="IPR000477">
    <property type="entry name" value="RT_dom"/>
</dbReference>
<dbReference type="InterPro" id="IPR010659">
    <property type="entry name" value="RVT_connect"/>
</dbReference>
<dbReference type="InterPro" id="IPR010661">
    <property type="entry name" value="RVT_thumb"/>
</dbReference>
<dbReference type="InterPro" id="IPR001878">
    <property type="entry name" value="Znf_CCHC"/>
</dbReference>
<dbReference type="InterPro" id="IPR036875">
    <property type="entry name" value="Znf_CCHC_sf"/>
</dbReference>
<dbReference type="PANTHER" id="PTHR41694">
    <property type="entry name" value="ENDOGENOUS RETROVIRUS GROUP K MEMBER POL PROTEIN"/>
    <property type="match status" value="1"/>
</dbReference>
<dbReference type="PANTHER" id="PTHR41694:SF3">
    <property type="entry name" value="RNA-DIRECTED DNA POLYMERASE-RELATED"/>
    <property type="match status" value="1"/>
</dbReference>
<dbReference type="Pfam" id="PF00540">
    <property type="entry name" value="Gag_p17"/>
    <property type="match status" value="1"/>
</dbReference>
<dbReference type="Pfam" id="PF00607">
    <property type="entry name" value="Gag_p24"/>
    <property type="match status" value="1"/>
</dbReference>
<dbReference type="Pfam" id="PF19317">
    <property type="entry name" value="Gag_p24_C"/>
    <property type="match status" value="1"/>
</dbReference>
<dbReference type="Pfam" id="PF00552">
    <property type="entry name" value="IN_DBD_C"/>
    <property type="match status" value="1"/>
</dbReference>
<dbReference type="Pfam" id="PF02022">
    <property type="entry name" value="Integrase_Zn"/>
    <property type="match status" value="1"/>
</dbReference>
<dbReference type="Pfam" id="PF00075">
    <property type="entry name" value="RNase_H"/>
    <property type="match status" value="1"/>
</dbReference>
<dbReference type="Pfam" id="PF00665">
    <property type="entry name" value="rve"/>
    <property type="match status" value="1"/>
</dbReference>
<dbReference type="Pfam" id="PF00077">
    <property type="entry name" value="RVP"/>
    <property type="match status" value="1"/>
</dbReference>
<dbReference type="Pfam" id="PF00078">
    <property type="entry name" value="RVT_1"/>
    <property type="match status" value="1"/>
</dbReference>
<dbReference type="Pfam" id="PF06815">
    <property type="entry name" value="RVT_connect"/>
    <property type="match status" value="1"/>
</dbReference>
<dbReference type="Pfam" id="PF06817">
    <property type="entry name" value="RVT_thumb"/>
    <property type="match status" value="1"/>
</dbReference>
<dbReference type="Pfam" id="PF00098">
    <property type="entry name" value="zf-CCHC"/>
    <property type="match status" value="2"/>
</dbReference>
<dbReference type="PRINTS" id="PR00234">
    <property type="entry name" value="HIV1MATRIX"/>
</dbReference>
<dbReference type="SMART" id="SM00343">
    <property type="entry name" value="ZnF_C2HC"/>
    <property type="match status" value="2"/>
</dbReference>
<dbReference type="SUPFAM" id="SSF50630">
    <property type="entry name" value="Acid proteases"/>
    <property type="match status" value="1"/>
</dbReference>
<dbReference type="SUPFAM" id="SSF50122">
    <property type="entry name" value="DNA-binding domain of retroviral integrase"/>
    <property type="match status" value="1"/>
</dbReference>
<dbReference type="SUPFAM" id="SSF56672">
    <property type="entry name" value="DNA/RNA polymerases"/>
    <property type="match status" value="1"/>
</dbReference>
<dbReference type="SUPFAM" id="SSF46919">
    <property type="entry name" value="N-terminal Zn binding domain of HIV integrase"/>
    <property type="match status" value="1"/>
</dbReference>
<dbReference type="SUPFAM" id="SSF47836">
    <property type="entry name" value="Retroviral matrix proteins"/>
    <property type="match status" value="1"/>
</dbReference>
<dbReference type="SUPFAM" id="SSF47353">
    <property type="entry name" value="Retrovirus capsid dimerization domain-like"/>
    <property type="match status" value="1"/>
</dbReference>
<dbReference type="SUPFAM" id="SSF47943">
    <property type="entry name" value="Retrovirus capsid protein, N-terminal core domain"/>
    <property type="match status" value="1"/>
</dbReference>
<dbReference type="SUPFAM" id="SSF57756">
    <property type="entry name" value="Retrovirus zinc finger-like domains"/>
    <property type="match status" value="1"/>
</dbReference>
<dbReference type="SUPFAM" id="SSF53098">
    <property type="entry name" value="Ribonuclease H-like"/>
    <property type="match status" value="2"/>
</dbReference>
<dbReference type="PROSITE" id="PS50175">
    <property type="entry name" value="ASP_PROT_RETROV"/>
    <property type="match status" value="1"/>
</dbReference>
<dbReference type="PROSITE" id="PS00141">
    <property type="entry name" value="ASP_PROTEASE"/>
    <property type="match status" value="1"/>
</dbReference>
<dbReference type="PROSITE" id="PS50994">
    <property type="entry name" value="INTEGRASE"/>
    <property type="match status" value="1"/>
</dbReference>
<dbReference type="PROSITE" id="PS51027">
    <property type="entry name" value="INTEGRASE_DBD"/>
    <property type="match status" value="1"/>
</dbReference>
<dbReference type="PROSITE" id="PS50879">
    <property type="entry name" value="RNASE_H_1"/>
    <property type="match status" value="1"/>
</dbReference>
<dbReference type="PROSITE" id="PS50878">
    <property type="entry name" value="RT_POL"/>
    <property type="match status" value="1"/>
</dbReference>
<dbReference type="PROSITE" id="PS50158">
    <property type="entry name" value="ZF_CCHC"/>
    <property type="match status" value="2"/>
</dbReference>
<dbReference type="PROSITE" id="PS50876">
    <property type="entry name" value="ZF_INTEGRASE"/>
    <property type="match status" value="1"/>
</dbReference>
<proteinExistence type="evidence at protein level"/>
<comment type="function">
    <molecule>Gag-Pol polyprotein</molecule>
    <text evidence="1">Mediates, with Gag polyprotein, the essential events in virion assembly, including binding the plasma membrane, making the protein-protein interactions necessary to create spherical particles, recruiting the viral Env proteins, and packaging the genomic RNA via direct interactions with the RNA packaging sequence (Psi). Gag-Pol polyprotein may regulate its own translation, by the binding genomic RNA in the 5'-UTR. At low concentration, the polyprotein would promote translation, whereas at high concentration, the polyprotein would encapsidate genomic RNA and then shut off translation.</text>
</comment>
<comment type="function">
    <molecule>Matrix protein p17</molecule>
    <text evidence="8">Targets the polyprotein to the plasma membrane via a multipartite membrane-binding signal, that includes its myristoylated N-terminus. Matrix protein is part of the pre-integration complex. Implicated in the release from host cell mediated by Vpu. Binds to RNA.</text>
</comment>
<comment type="function">
    <molecule>Capsid protein p24</molecule>
    <text evidence="5 8">Forms the conical core that encapsulates the genomic RNA-nucleocapsid complex in the virion. Most core are conical, with only 7% tubular. The core is constituted by capsid protein hexamer subunits. The core is disassembled soon after virion entry (By similarity). Host restriction factors such as TRIM5-alpha or TRIMCyp bind retroviral capsids and cause premature capsid disassembly, leading to blocks in reverse transcription. Capsid restriction by TRIM5 is one of the factors which restricts HIV-1 to the human species. Host PIN1 apparently facilitates the virion uncoating. On the other hand, interactions with PDZD8 or CYPA stabilize the capsid.</text>
</comment>
<comment type="function">
    <molecule>Nucleocapsid protein p7</molecule>
    <text evidence="5">Encapsulates and protects viral dimeric unspliced genomic RNA (gRNA). Binds these RNAs through its zinc fingers. Acts as a nucleic acid chaperone which is involved in rearangement of nucleic acid secondary structure during gRNA retrotranscription. Also facilitates template switch leading to recombination. As part of the polyprotein, participates in gRNA dimerization, packaging, tRNA incorporation and virion assembly.</text>
</comment>
<comment type="function">
    <molecule>Protease</molecule>
    <text evidence="5 11">Aspartyl protease that mediates proteolytic cleavages of Gag and Gag-Pol polyproteins during or shortly after the release of the virion from the plasma membrane. Cleavages take place as an ordered, step-wise cascade to yield mature proteins. This process is called maturation. Displays maximal activity during the budding process just prior to particle release from the cell. Also cleaves Nef and Vif, probably concomitantly with viral structural proteins on maturation of virus particles. Hydrolyzes host EIF4GI and PABP1 in order to shut off the capped cellular mRNA translation. The resulting inhibition of cellular protein synthesis serves to ensure maximal viral gene expression and to evade host immune response (By similarity).</text>
</comment>
<comment type="function">
    <molecule>Reverse transcriptase/ribonuclease H</molecule>
    <text evidence="5">Multifunctional enzyme that converts the viral RNA genome into dsDNA in the cytoplasm, shortly after virus entry into the cell. This enzyme displays a DNA polymerase activity that can copy either DNA or RNA templates, and a ribonuclease H (RNase H) activity that cleaves the RNA strand of RNA-DNA heteroduplexes in a partially processive 3' to 5' endonucleasic mode. Conversion of viral genomic RNA into dsDNA requires many steps. A tRNA(3)-Lys binds to the primer-binding site (PBS) situated at the 5'-end of the viral RNA. RT uses the 3' end of the tRNA primer to perform a short round of RNA-dependent minus-strand DNA synthesis. The reading proceeds through the U5 region and ends after the repeated (R) region which is present at both ends of viral RNA. The portion of the RNA-DNA heteroduplex is digested by the RNase H, resulting in a ssDNA product attached to the tRNA primer. This ssDNA/tRNA hybridizes with the identical R region situated at the 3' end of viral RNA. This template exchange, known as minus-strand DNA strong stop transfer, can be either intra- or intermolecular. RT uses the 3' end of this newly synthesized short ssDNA to perform the RNA-dependent minus-strand DNA synthesis of the whole template. RNase H digests the RNA template except for two polypurine tracts (PPTs) situated at the 5'-end and near the center of the genome. It is not clear if both polymerase and RNase H activities are simultaneous. RNase H probably can proceed both in a polymerase-dependent (RNA cut into small fragments by the same RT performing DNA synthesis) and a polymerase-independent mode (cleavage of remaining RNA fragments by free RTs). Secondly, RT performs DNA-directed plus-strand DNA synthesis using the PPTs that have not been removed by RNase H as primers. PPTs and tRNA primers are then removed by RNase H. The 3' and 5' ssDNA PBS regions hybridize to form a circular dsDNA intermediate. Strand displacement synthesis by RT to the PBS and PPT ends produces a blunt ended, linear dsDNA copy of the viral genome that includes long terminal repeats (LTRs) at both ends.</text>
</comment>
<comment type="function">
    <molecule>Integrase</molecule>
    <text evidence="5">Catalyzes viral DNA integration into the host chromosome, by performing a series of DNA cutting and joining reactions. This enzyme activity takes place after virion entry into a cell and reverse transcription of the RNA genome in dsDNA. The first step in the integration process is 3' processing. This step requires a complex comprising the viral genome, matrix protein, Vpr and integrase. This complex is called the pre-integration complex (PIC). The integrase protein removes 2 nucleotides from each 3' end of the viral DNA, leaving recessed CA OH's at the 3' ends. In the second step, the PIC enters cell nucleus. This process is mediated through integrase and Vpr proteins, and allows the virus to infect a non dividing cell. This ability to enter the nucleus is specific of lentiviruses, other retroviruses cannot and rely on cell division to access cell chromosomes. In the third step, termed strand transfer, the integrase protein joins the previously processed 3' ends to the 5' ends of strands of target cellular DNA at the site of integration. The 5'-ends are produced by integrase-catalyzed staggered cuts, 5 bp apart. A Y-shaped, gapped, recombination intermediate results, with the 5'-ends of the viral DNA strands and the 3' ends of target DNA strands remaining unjoined, flanking a gap of 5 bp. The last step is viral DNA integration into host chromosome. This involves host DNA repair synthesis in which the 5 bp gaps between the unjoined strands are filled in and then ligated. Since this process occurs at both cuts flanking the HIV genome, a 5 bp duplication of host DNA is produced at the ends of HIV-1 integration. Alternatively, Integrase may catalyze the excision of viral DNA just after strand transfer, this is termed disintegration.</text>
</comment>
<comment type="catalytic activity">
    <reaction evidence="11">
        <text>Endopeptidase for which the P1 residue is preferably hydrophobic.</text>
        <dbReference type="EC" id="3.4.23.47"/>
    </reaction>
</comment>
<comment type="catalytic activity">
    <reaction evidence="1">
        <text>Endohydrolysis of RNA in RNA/DNA hybrids. Three different cleavage modes: 1. sequence-specific internal cleavage of RNA. Human immunodeficiency virus type 1 and Moloney murine leukemia virus enzymes prefer to cleave the RNA strand one nucleotide away from the RNA-DNA junction. 2. RNA 5'-end directed cleavage 13-19 nucleotides from the RNA end. 3. DNA 3'-end directed cleavage 15-20 nucleotides away from the primer terminus.</text>
        <dbReference type="EC" id="3.1.26.13"/>
    </reaction>
</comment>
<comment type="catalytic activity">
    <reaction evidence="1">
        <text>3'-end directed exonucleolytic cleavage of viral RNA-DNA hybrid.</text>
        <dbReference type="EC" id="3.1.13.2"/>
    </reaction>
</comment>
<comment type="catalytic activity">
    <reaction evidence="12">
        <text>DNA(n) + a 2'-deoxyribonucleoside 5'-triphosphate = DNA(n+1) + diphosphate</text>
        <dbReference type="Rhea" id="RHEA:22508"/>
        <dbReference type="Rhea" id="RHEA-COMP:17339"/>
        <dbReference type="Rhea" id="RHEA-COMP:17340"/>
        <dbReference type="ChEBI" id="CHEBI:33019"/>
        <dbReference type="ChEBI" id="CHEBI:61560"/>
        <dbReference type="ChEBI" id="CHEBI:173112"/>
        <dbReference type="EC" id="2.7.7.49"/>
    </reaction>
</comment>
<comment type="catalytic activity">
    <reaction evidence="12">
        <text>DNA(n) + a 2'-deoxyribonucleoside 5'-triphosphate = DNA(n+1) + diphosphate</text>
        <dbReference type="Rhea" id="RHEA:22508"/>
        <dbReference type="Rhea" id="RHEA-COMP:17339"/>
        <dbReference type="Rhea" id="RHEA-COMP:17340"/>
        <dbReference type="ChEBI" id="CHEBI:33019"/>
        <dbReference type="ChEBI" id="CHEBI:61560"/>
        <dbReference type="ChEBI" id="CHEBI:173112"/>
        <dbReference type="EC" id="2.7.7.7"/>
    </reaction>
</comment>
<comment type="cofactor">
    <cofactor evidence="1">
        <name>Mg(2+)</name>
        <dbReference type="ChEBI" id="CHEBI:18420"/>
    </cofactor>
    <text evidence="1">Binds 2 magnesium ions for reverse transcriptase polymerase activity.</text>
</comment>
<comment type="cofactor">
    <cofactor evidence="1">
        <name>Mg(2+)</name>
        <dbReference type="ChEBI" id="CHEBI:18420"/>
    </cofactor>
    <text evidence="1">Binds 2 magnesium ions for ribonuclease H (RNase H) activity. Substrate-binding is a precondition for magnesium binding.</text>
</comment>
<comment type="cofactor">
    <cofactor evidence="1">
        <name>Mg(2+)</name>
        <dbReference type="ChEBI" id="CHEBI:18420"/>
    </cofactor>
    <text evidence="1">Magnesium ions are required for integrase activity. Binds at least 1, maybe 2 magnesium ions.</text>
</comment>
<comment type="activity regulation">
    <text evidence="1">Protease: The viral protease is inhibited by many synthetic protease inhibitors (PIs), such as amprenavir, atazanavir, indinavir, loprinavir, nelfinavir, ritonavir and saquinavir. Use of protease inhibitors in tritherapy regimens permit more ambitious therapeutic strategies. Reverse transcriptase/ribonuclease H: RT can be inhibited either by nucleoside RT inhibitors (NRTIs) or by non nucleoside RT inhibitors (NNRTIs). NRTIs act as chain terminators, whereas NNRTIs inhibit DNA polymerization by binding a small hydrophobic pocket near the RT active site and inducing an allosteric change in this region. Classical NRTIs are abacavir, adefovir (PMEA), didanosine (ddI), lamivudine (3TC), stavudine (d4T), tenofovir (PMPA), zalcitabine (ddC), and zidovudine (AZT). Classical NNRTIs are atevirdine (BHAP U-87201E), delavirdine, efavirenz (DMP-266), emivirine (I-EBU), and nevirapine (BI-RG-587). The tritherapies used as a basic effective treatment of AIDS associate two NRTIs and one NNRTI.</text>
</comment>
<comment type="subunit">
    <molecule>Matrix protein p17</molecule>
    <text evidence="6 7">Homotrimer; further assembles as hexamers of trimers. Interacts with gp41 (via C-terminus). Interacts with host CALM1; this interaction induces a conformational change in the Matrix protein, triggering exposure of the myristate group. Interacts with host AP3D1; this interaction allows the polyprotein trafficking to multivesicular bodies during virus assembly. Part of the pre-integration complex (PIC) which is composed of viral genome, matrix protein, Vpr and integrase.</text>
</comment>
<comment type="subunit">
    <molecule>Capsid protein p24</molecule>
    <text evidence="2 6 7">Homodimer; the homodimer further multimerizes as homohexamers or homopentamers. Interacts with human PPIA/CYPA. Interacts with human NUP153. Interacts with host PDZD8; this interaction stabilizes the capsid. Interacts with monkey TRIM5; this interaction destabilizes the capsid.</text>
</comment>
<comment type="subunit">
    <molecule>Protease</molecule>
    <text evidence="5 8">Homodimer, whose active site consists of two apposed aspartic acid residues.</text>
</comment>
<comment type="subunit">
    <molecule>Reverse transcriptase/ribonuclease H</molecule>
    <text evidence="3">Heterodimer of p66 RT and p51 RT (RT p66/p51) (By similarity). Heterodimerization of RT is essential for DNA polymerase activity (By similarity). The overall folding of the subdomains is similar in p66 RT and p51 RT but the spatial arrangements of the subdomains are dramatically different (By similarity).</text>
</comment>
<comment type="subunit">
    <molecule>Integrase</molecule>
    <text evidence="4 5 8">Homotetramer; may further associate as a homohexadecamer (By similarity). Part of the pre-integration complex (PIC) which is composed of viral genome, matrix protein, Vpr and integrase. Interacts with human SMARCB1/INI1 and human PSIP1/LEDGF isoform 1. Interacts with human KPNA3; this interaction might play a role in nuclear import of the pre-integration complex (By similarity). Interacts with human NUP153; this interaction might play a role in nuclear import of the pre-integration complex (By similarity).</text>
</comment>
<comment type="subcellular location">
    <molecule>Gag-Pol polyprotein</molecule>
    <subcellularLocation>
        <location>Host cell membrane</location>
        <topology>Lipid-anchor</topology>
    </subcellularLocation>
    <subcellularLocation>
        <location>Host endosome</location>
        <location>Host multivesicular body</location>
    </subcellularLocation>
    <text evidence="8">These locations are linked to virus assembly sites. The main location is the cell membrane, but under some circumstances, late endosomal compartments can serve as productive sites for virion assembly.</text>
</comment>
<comment type="subcellular location">
    <molecule>Matrix protein p17</molecule>
    <subcellularLocation>
        <location>Virion membrane</location>
        <topology evidence="19">Lipid-anchor</topology>
    </subcellularLocation>
    <subcellularLocation>
        <location evidence="1">Host nucleus</location>
    </subcellularLocation>
    <subcellularLocation>
        <location evidence="1">Host cytoplasm</location>
    </subcellularLocation>
</comment>
<comment type="subcellular location">
    <molecule>Capsid protein p24</molecule>
    <subcellularLocation>
        <location evidence="19">Virion</location>
    </subcellularLocation>
</comment>
<comment type="subcellular location">
    <molecule>Nucleocapsid protein p7</molecule>
    <subcellularLocation>
        <location evidence="19">Virion</location>
    </subcellularLocation>
</comment>
<comment type="subcellular location">
    <molecule>Reverse transcriptase/ribonuclease H</molecule>
    <subcellularLocation>
        <location evidence="19">Virion</location>
    </subcellularLocation>
</comment>
<comment type="subcellular location">
    <molecule>Integrase</molecule>
    <subcellularLocation>
        <location evidence="19">Virion</location>
    </subcellularLocation>
    <subcellularLocation>
        <location evidence="19">Host nucleus</location>
    </subcellularLocation>
    <subcellularLocation>
        <location evidence="19">Host cytoplasm</location>
    </subcellularLocation>
    <text evidence="19">Nuclear at initial phase, cytoplasmic at assembly.</text>
</comment>
<comment type="alternative products">
    <event type="ribosomal frameshifting"/>
    <isoform>
        <id>P18042-1</id>
        <name>Gag-Pol polyprotein</name>
        <sequence type="displayed"/>
    </isoform>
    <isoform>
        <id>P18041-1</id>
        <name>Gag polyprotein</name>
        <sequence type="external"/>
    </isoform>
    <text>Translation results in the formation of the Gag polyprotein most of the time. Ribosomal frameshifting at the gag-pol genes boundary occurs at low frequency and produces the Gag-Pol polyprotein. This strategy of translation probably allows the virus to modulate the quantity of each viral protein. Maintenance of a correct Gag to Gag-Pol ratio is essential for RNA dimerization and viral infectivity.</text>
</comment>
<comment type="domain">
    <molecule>Reverse transcriptase/ribonuclease H</molecule>
    <text evidence="1">RT is structured in five subdomains: finger, palm, thumb, connection and RNase H. Within the palm subdomain, the 'primer grip' region is thought to be involved in the positioning of the primer terminus for accommodating the incoming nucleotide. The RNase H domain stabilizes the association of RT with primer-template.</text>
</comment>
<comment type="domain">
    <molecule>Reverse transcriptase/ribonuclease H</molecule>
    <text evidence="1">The tryptophan repeat motif is involved in RT p66/p51 dimerization (By similarity).</text>
</comment>
<comment type="domain">
    <molecule>Integrase</molecule>
    <text evidence="1">The core domain contains the D-x(n)-D-x(35)-E motif, named for the phylogenetically conserved glutamic acid and aspartic acid residues and the invariant 35 amino acid spacing between the second and third acidic residues. Each acidic residue of the D,D(35)E motif is independently essential for the 3'-processing and strand transfer activities of purified integrase protein.</text>
</comment>
<comment type="PTM">
    <molecule>Gag-Pol polyprotein</molecule>
    <text evidence="5 12">Specific enzymatic cleavages by the viral protease yield mature proteins. The protease is released by autocatalytic cleavage. The polyprotein is cleaved during and after budding, this process is termed maturation. Proteolytic cleavage of p66 RT removes the RNase H domain to yield the p51 RT subunit. Nucleocapsid protein p7 might be further cleaved after virus entry.</text>
</comment>
<comment type="miscellaneous">
    <molecule>Reverse transcriptase/ribonuclease H</molecule>
    <text evidence="1">Error-prone enzyme that lacks a proof-reading function. High mutations rate is a direct consequence of this characteristic. RT also displays frequent template switching leading to high recombination rate. Recombination mostly occurs between homologous regions of the two copackaged RNA genomes. If these two RNA molecules derive from different viral strains, reverse transcription will give rise to highly recombinated proviral DNAs.</text>
</comment>
<comment type="miscellaneous">
    <molecule>Isoform Gag-Pol polyprotein</molecule>
    <text>Produced by -1 ribosomal frameshifting.</text>
</comment>
<gene>
    <name type="primary">gag-pol</name>
</gene>
<protein>
    <recommendedName>
        <fullName>Gag-Pol polyprotein</fullName>
    </recommendedName>
    <alternativeName>
        <fullName>Pr160Gag-Pol</fullName>
    </alternativeName>
    <component>
        <recommendedName>
            <fullName>Matrix protein p17</fullName>
            <shortName>MA</shortName>
        </recommendedName>
    </component>
    <component>
        <recommendedName>
            <fullName>Capsid protein p24</fullName>
            <shortName>CA</shortName>
        </recommendedName>
    </component>
    <component>
        <recommendedName>
            <fullName evidence="8">Spacer peptide 1</fullName>
            <shortName>SP1</shortName>
        </recommendedName>
        <alternativeName>
            <fullName>p2</fullName>
        </alternativeName>
    </component>
    <component>
        <recommendedName>
            <fullName>Nucleocapsid protein p7</fullName>
            <shortName>NC</shortName>
        </recommendedName>
    </component>
    <component>
        <recommendedName>
            <fullName>Transframe peptide</fullName>
            <shortName>TF</shortName>
        </recommendedName>
    </component>
    <component>
        <recommendedName>
            <fullName>p6-pol</fullName>
            <shortName>p6*</shortName>
        </recommendedName>
    </component>
    <component>
        <recommendedName>
            <fullName>Protease</fullName>
            <ecNumber>3.4.23.47</ecNumber>
        </recommendedName>
        <alternativeName>
            <fullName>PR</fullName>
        </alternativeName>
        <alternativeName>
            <fullName>Retropepsin</fullName>
        </alternativeName>
    </component>
    <component>
        <recommendedName>
            <fullName>Reverse transcriptase/ribonuclease H</fullName>
            <ecNumber>2.7.7.49</ecNumber>
            <ecNumber>2.7.7.7</ecNumber>
            <ecNumber>3.1.26.13</ecNumber>
        </recommendedName>
        <alternativeName>
            <fullName>Exoribonuclease H</fullName>
            <ecNumber>3.1.13.2</ecNumber>
        </alternativeName>
        <alternativeName>
            <fullName>p66 RT</fullName>
        </alternativeName>
    </component>
    <component>
        <recommendedName>
            <fullName>p51 RT</fullName>
        </recommendedName>
    </component>
    <component>
        <recommendedName>
            <fullName>p15</fullName>
        </recommendedName>
    </component>
    <component>
        <recommendedName>
            <fullName>Integrase</fullName>
            <shortName>IN</shortName>
            <ecNumber evidence="5">2.7.7.-</ecNumber>
            <ecNumber evidence="5">3.1.-.-</ecNumber>
        </recommendedName>
    </component>
</protein>
<accession>P18042</accession>
<keyword id="KW-0002">3D-structure</keyword>
<keyword id="KW-0014">AIDS</keyword>
<keyword id="KW-0064">Aspartyl protease</keyword>
<keyword id="KW-0167">Capsid protein</keyword>
<keyword id="KW-0229">DNA integration</keyword>
<keyword id="KW-0233">DNA recombination</keyword>
<keyword id="KW-0238">DNA-binding</keyword>
<keyword id="KW-0239">DNA-directed DNA polymerase</keyword>
<keyword id="KW-0255">Endonuclease</keyword>
<keyword id="KW-1262">Eukaryotic host gene expression shutoff by virus</keyword>
<keyword id="KW-1193">Eukaryotic host translation shutoff by virus</keyword>
<keyword id="KW-1032">Host cell membrane</keyword>
<keyword id="KW-1035">Host cytoplasm</keyword>
<keyword id="KW-1039">Host endosome</keyword>
<keyword id="KW-1190">Host gene expression shutoff by virus</keyword>
<keyword id="KW-1043">Host membrane</keyword>
<keyword id="KW-1048">Host nucleus</keyword>
<keyword id="KW-0945">Host-virus interaction</keyword>
<keyword id="KW-0378">Hydrolase</keyword>
<keyword id="KW-0446">Lipid-binding</keyword>
<keyword id="KW-0449">Lipoprotein</keyword>
<keyword id="KW-0460">Magnesium</keyword>
<keyword id="KW-0472">Membrane</keyword>
<keyword id="KW-0479">Metal-binding</keyword>
<keyword id="KW-0511">Multifunctional enzyme</keyword>
<keyword id="KW-0519">Myristate</keyword>
<keyword id="KW-0540">Nuclease</keyword>
<keyword id="KW-0548">Nucleotidyltransferase</keyword>
<keyword id="KW-0645">Protease</keyword>
<keyword id="KW-0677">Repeat</keyword>
<keyword id="KW-0688">Ribosomal frameshifting</keyword>
<keyword id="KW-0694">RNA-binding</keyword>
<keyword id="KW-0695">RNA-directed DNA polymerase</keyword>
<keyword id="KW-0808">Transferase</keyword>
<keyword id="KW-1179">Viral genome integration</keyword>
<keyword id="KW-0543">Viral nucleoprotein</keyword>
<keyword id="KW-1163">Viral penetration into host nucleus</keyword>
<keyword id="KW-1188">Viral release from host cell</keyword>
<keyword id="KW-0946">Virion</keyword>
<keyword id="KW-0917">Virion maturation</keyword>
<keyword id="KW-1160">Virus entry into host cell</keyword>
<keyword id="KW-0862">Zinc</keyword>
<keyword id="KW-0863">Zinc-finger</keyword>
<feature type="initiator methionine" description="Removed; by host" evidence="1">
    <location>
        <position position="1"/>
    </location>
</feature>
<feature type="chain" id="PRO_0000261295" description="Gag-Pol polyprotein">
    <location>
        <begin position="2"/>
        <end position="1464"/>
    </location>
</feature>
<feature type="chain" id="PRO_0000042493" description="Matrix protein p17" evidence="1">
    <location>
        <begin position="2"/>
        <end position="135"/>
    </location>
</feature>
<feature type="chain" id="PRO_0000042494" description="Capsid protein p24" evidence="1">
    <location>
        <begin position="136"/>
        <end position="366"/>
    </location>
</feature>
<feature type="peptide" id="PRO_0000042495" description="Spacer peptide 1" evidence="1">
    <location>
        <begin position="367"/>
        <end position="383"/>
    </location>
</feature>
<feature type="chain" id="PRO_0000042497" description="Nucleocapsid protein p7" evidence="1">
    <location>
        <begin position="384"/>
        <end position="432"/>
    </location>
</feature>
<feature type="peptide" id="PRO_0000246744" description="Transframe peptide" evidence="9">
    <location>
        <begin position="433"/>
        <end position="446"/>
    </location>
</feature>
<feature type="chain" id="PRO_0000042499" description="p6-pol" evidence="9">
    <location>
        <begin position="447"/>
        <end position="513"/>
    </location>
</feature>
<feature type="chain" id="PRO_0000038670" description="Protease" evidence="1">
    <location>
        <begin position="514"/>
        <end position="612"/>
    </location>
</feature>
<feature type="chain" id="PRO_0000042500" description="Reverse transcriptase/ribonuclease H" evidence="1">
    <location>
        <begin position="613"/>
        <end position="1171"/>
    </location>
</feature>
<feature type="chain" id="PRO_0000042501" description="p51 RT" evidence="1">
    <location>
        <begin position="613"/>
        <end position="1051"/>
    </location>
</feature>
<feature type="chain" id="PRO_0000042502" description="p15" evidence="1">
    <location>
        <begin position="1052"/>
        <end position="1171"/>
    </location>
</feature>
<feature type="chain" id="PRO_0000042503" description="Integrase" evidence="1">
    <location>
        <begin position="1172"/>
        <end position="1464"/>
    </location>
</feature>
<feature type="domain" description="Peptidase A2" evidence="11">
    <location>
        <begin position="533"/>
        <end position="602"/>
    </location>
</feature>
<feature type="domain" description="Reverse transcriptase" evidence="12">
    <location>
        <begin position="656"/>
        <end position="846"/>
    </location>
</feature>
<feature type="domain" description="RNase H type-1" evidence="13">
    <location>
        <begin position="1045"/>
        <end position="1168"/>
    </location>
</feature>
<feature type="domain" description="Integrase catalytic" evidence="15">
    <location>
        <begin position="1224"/>
        <end position="1375"/>
    </location>
</feature>
<feature type="zinc finger region" description="CCHC-type 1" evidence="10">
    <location>
        <begin position="390"/>
        <end position="407"/>
    </location>
</feature>
<feature type="zinc finger region" description="CCHC-type 2" evidence="10">
    <location>
        <begin position="411"/>
        <end position="428"/>
    </location>
</feature>
<feature type="zinc finger region" description="Integrase-type" evidence="14">
    <location>
        <begin position="1174"/>
        <end position="1215"/>
    </location>
</feature>
<feature type="DNA-binding region" description="Integrase-type" evidence="16">
    <location>
        <begin position="1394"/>
        <end position="1441"/>
    </location>
</feature>
<feature type="region of interest" description="Interaction with Gp41" evidence="8">
    <location>
        <begin position="7"/>
        <end position="31"/>
    </location>
</feature>
<feature type="region of interest" description="Disordered" evidence="18">
    <location>
        <begin position="108"/>
        <end position="146"/>
    </location>
</feature>
<feature type="region of interest" description="Interaction with human PPIA/CYPA and NUP153" evidence="8">
    <location>
        <begin position="192"/>
        <end position="229"/>
    </location>
</feature>
<feature type="region of interest" description="Dimerization/Multimerization of capsid protein p24" evidence="5">
    <location>
        <begin position="280"/>
        <end position="366"/>
    </location>
</feature>
<feature type="region of interest" description="Disordered" evidence="18">
    <location>
        <begin position="434"/>
        <end position="509"/>
    </location>
</feature>
<feature type="region of interest" description="Dimerization of protease" evidence="5">
    <location>
        <begin position="514"/>
        <end position="518"/>
    </location>
</feature>
<feature type="region of interest" description="Dimerization of protease" evidence="5">
    <location>
        <begin position="562"/>
        <end position="568"/>
    </location>
</feature>
<feature type="region of interest" description="Dimerization of protease" evidence="5">
    <location>
        <begin position="601"/>
        <end position="613"/>
    </location>
</feature>
<feature type="region of interest" description="RT 'primer grip'" evidence="1">
    <location>
        <begin position="839"/>
        <end position="847"/>
    </location>
</feature>
<feature type="short sequence motif" description="Nuclear export signal" evidence="1">
    <location>
        <begin position="16"/>
        <end position="22"/>
    </location>
</feature>
<feature type="short sequence motif" description="Nuclear localization signal" evidence="1">
    <location>
        <begin position="26"/>
        <end position="32"/>
    </location>
</feature>
<feature type="short sequence motif" description="Tryptophan repeat motif" evidence="1">
    <location>
        <begin position="1009"/>
        <end position="1025"/>
    </location>
</feature>
<feature type="compositionally biased region" description="Low complexity" evidence="18">
    <location>
        <begin position="459"/>
        <end position="468"/>
    </location>
</feature>
<feature type="compositionally biased region" description="Basic and acidic residues" evidence="18">
    <location>
        <begin position="477"/>
        <end position="492"/>
    </location>
</feature>
<feature type="active site" description="For protease activity; shared with dimeric partner" evidence="17">
    <location>
        <position position="538"/>
    </location>
</feature>
<feature type="binding site" evidence="1">
    <location>
        <position position="722"/>
    </location>
    <ligand>
        <name>Mg(2+)</name>
        <dbReference type="ChEBI" id="CHEBI:18420"/>
        <label>1</label>
        <note>catalytic; for reverse transcriptase activity</note>
    </ligand>
</feature>
<feature type="binding site" evidence="1">
    <location>
        <position position="797"/>
    </location>
    <ligand>
        <name>Mg(2+)</name>
        <dbReference type="ChEBI" id="CHEBI:18420"/>
        <label>1</label>
        <note>catalytic; for reverse transcriptase activity</note>
    </ligand>
</feature>
<feature type="binding site" evidence="1">
    <location>
        <position position="798"/>
    </location>
    <ligand>
        <name>Mg(2+)</name>
        <dbReference type="ChEBI" id="CHEBI:18420"/>
        <label>1</label>
        <note>catalytic; for reverse transcriptase activity</note>
    </ligand>
</feature>
<feature type="binding site" evidence="1">
    <location>
        <position position="1054"/>
    </location>
    <ligand>
        <name>Mg(2+)</name>
        <dbReference type="ChEBI" id="CHEBI:18420"/>
        <label>2</label>
        <note>catalytic; for RNase H activity</note>
    </ligand>
</feature>
<feature type="binding site" evidence="1">
    <location>
        <position position="1089"/>
    </location>
    <ligand>
        <name>Mg(2+)</name>
        <dbReference type="ChEBI" id="CHEBI:18420"/>
        <label>2</label>
        <note>catalytic; for RNase H activity</note>
    </ligand>
</feature>
<feature type="binding site" evidence="1">
    <location>
        <position position="1109"/>
    </location>
    <ligand>
        <name>Mg(2+)</name>
        <dbReference type="ChEBI" id="CHEBI:18420"/>
        <label>2</label>
        <note>catalytic; for RNase H activity</note>
    </ligand>
</feature>
<feature type="binding site" evidence="1">
    <location>
        <position position="1160"/>
    </location>
    <ligand>
        <name>Mg(2+)</name>
        <dbReference type="ChEBI" id="CHEBI:18420"/>
        <label>2</label>
        <note>catalytic; for RNase H activity</note>
    </ligand>
</feature>
<feature type="binding site" evidence="14">
    <location>
        <position position="1183"/>
    </location>
    <ligand>
        <name>Zn(2+)</name>
        <dbReference type="ChEBI" id="CHEBI:29105"/>
    </ligand>
</feature>
<feature type="binding site" evidence="14">
    <location>
        <position position="1187"/>
    </location>
    <ligand>
        <name>Zn(2+)</name>
        <dbReference type="ChEBI" id="CHEBI:29105"/>
    </ligand>
</feature>
<feature type="binding site" evidence="14">
    <location>
        <position position="1211"/>
    </location>
    <ligand>
        <name>Zn(2+)</name>
        <dbReference type="ChEBI" id="CHEBI:29105"/>
    </ligand>
</feature>
<feature type="binding site" evidence="14">
    <location>
        <position position="1214"/>
    </location>
    <ligand>
        <name>Zn(2+)</name>
        <dbReference type="ChEBI" id="CHEBI:29105"/>
    </ligand>
</feature>
<feature type="binding site" evidence="1">
    <location>
        <position position="1235"/>
    </location>
    <ligand>
        <name>Mg(2+)</name>
        <dbReference type="ChEBI" id="CHEBI:18420"/>
        <label>3</label>
        <note>catalytic; for integrase activity</note>
    </ligand>
</feature>
<feature type="binding site" evidence="1">
    <location>
        <position position="1287"/>
    </location>
    <ligand>
        <name>Mg(2+)</name>
        <dbReference type="ChEBI" id="CHEBI:18420"/>
        <label>3</label>
        <note>catalytic; for integrase activity</note>
    </ligand>
</feature>
<feature type="binding site" evidence="5">
    <location>
        <position position="1323"/>
    </location>
    <ligand>
        <name>Mg(2+)</name>
        <dbReference type="ChEBI" id="CHEBI:18420"/>
        <label>3</label>
        <note>catalytic; for integrase activity</note>
    </ligand>
</feature>
<feature type="site" description="Cleavage; by viral protease" evidence="1">
    <location>
        <begin position="135"/>
        <end position="136"/>
    </location>
</feature>
<feature type="site" description="Cis/trans isomerization of proline peptide bond; by human PPIA/CYPA" evidence="1">
    <location>
        <begin position="223"/>
        <end position="224"/>
    </location>
</feature>
<feature type="site" description="Cleavage; by viral protease" evidence="1">
    <location>
        <begin position="366"/>
        <end position="367"/>
    </location>
</feature>
<feature type="site" description="Cleavage; by viral protease" evidence="1">
    <location>
        <begin position="383"/>
        <end position="384"/>
    </location>
</feature>
<feature type="site" description="Cleavage; by viral protease" evidence="9">
    <location>
        <begin position="432"/>
        <end position="433"/>
    </location>
</feature>
<feature type="site" description="Cleavage; by viral protease" evidence="1">
    <location>
        <begin position="446"/>
        <end position="447"/>
    </location>
</feature>
<feature type="site" description="Cleavage; by viral protease" evidence="1">
    <location>
        <begin position="513"/>
        <end position="514"/>
    </location>
</feature>
<feature type="site" description="Cleavage; by viral protease" evidence="1">
    <location>
        <begin position="612"/>
        <end position="613"/>
    </location>
</feature>
<feature type="site" description="Essential for RT p66/p51 heterodimerization" evidence="1">
    <location>
        <position position="1012"/>
    </location>
</feature>
<feature type="site" description="Essential for RT p66/p51 heterodimerization" evidence="1">
    <location>
        <position position="1025"/>
    </location>
</feature>
<feature type="site" description="Cleavage; by viral protease; partial" evidence="1">
    <location>
        <begin position="1051"/>
        <end position="1052"/>
    </location>
</feature>
<feature type="site" description="Cleavage; by viral protease" evidence="1">
    <location>
        <begin position="1171"/>
        <end position="1172"/>
    </location>
</feature>
<feature type="lipid moiety-binding region" description="N-myristoyl glycine; by host" evidence="1">
    <location>
        <position position="2"/>
    </location>
</feature>
<feature type="turn" evidence="20">
    <location>
        <begin position="393"/>
        <end position="395"/>
    </location>
</feature>
<feature type="strand" evidence="20">
    <location>
        <begin position="398"/>
        <end position="400"/>
    </location>
</feature>
<feature type="helix" evidence="20">
    <location>
        <begin position="402"/>
        <end position="404"/>
    </location>
</feature>
<feature type="strand" evidence="20">
    <location>
        <begin position="407"/>
        <end position="410"/>
    </location>
</feature>
<feature type="strand" evidence="21">
    <location>
        <begin position="414"/>
        <end position="416"/>
    </location>
</feature>
<feature type="strand" evidence="21">
    <location>
        <begin position="419"/>
        <end position="421"/>
    </location>
</feature>
<feature type="turn" evidence="21">
    <location>
        <begin position="423"/>
        <end position="425"/>
    </location>
</feature>
<feature type="helix" evidence="22">
    <location>
        <begin position="427"/>
        <end position="430"/>
    </location>
</feature>
<reference key="1">
    <citation type="journal article" date="1989" name="AIDS Res. Hum. Retroviruses">
        <title>Genomic divergence of HIV-2 from Ghana.</title>
        <authorList>
            <person name="Hasegawa A."/>
            <person name="Tsujimoto H."/>
            <person name="Maki N."/>
            <person name="Ishikawa K."/>
            <person name="Miura T."/>
            <person name="Fukasawa M."/>
            <person name="Miki K."/>
            <person name="Hayami M."/>
        </authorList>
    </citation>
    <scope>NUCLEOTIDE SEQUENCE [GENOMIC DNA]</scope>
</reference>
<reference key="2">
    <citation type="journal article" date="1996" name="Curr. Top. Microbiol. Immunol.">
        <title>Proteolytic processing and particle maturation.</title>
        <authorList>
            <person name="Vogt V.M."/>
        </authorList>
    </citation>
    <scope>REVIEW</scope>
</reference>
<reference key="3">
    <citation type="journal article" date="1999" name="J. Mol. Biol.">
        <title>Structural biology of HIV.</title>
        <authorList>
            <person name="Turner B.G."/>
            <person name="Summers M.F."/>
        </authorList>
    </citation>
    <scope>REVIEW</scope>
</reference>
<reference key="4">
    <citation type="journal article" date="2001" name="Annu. Rev. Genet.">
        <title>Mechanisms of retroviral recombination.</title>
        <authorList>
            <person name="Negroni M."/>
            <person name="Buc H."/>
        </authorList>
    </citation>
    <scope>REVIEW</scope>
</reference>
<reference key="5">
    <citation type="journal article" date="2002" name="Genome Biol.">
        <title>Retroviral proteases.</title>
        <authorList>
            <person name="Dunn B.M."/>
            <person name="Goodenow M.M."/>
            <person name="Gustchina A."/>
            <person name="Wlodawer A."/>
        </authorList>
    </citation>
    <scope>REVIEW</scope>
</reference>
<reference key="6">
    <citation type="journal article" date="1998" name="Biochemistry">
        <title>High-resolution solution NMR structure of the minimal active domain of the human immunodeficiency virus type-2 nucleocapsid protein.</title>
        <authorList>
            <person name="Kodera Y."/>
            <person name="Sato K."/>
            <person name="Tsukahara T."/>
            <person name="Komatsu H."/>
            <person name="Maeda T."/>
            <person name="Kohno T."/>
        </authorList>
    </citation>
    <scope>STRUCTURE BY NMR OF 384-412</scope>
</reference>